<proteinExistence type="inferred from homology"/>
<evidence type="ECO:0000250" key="1"/>
<evidence type="ECO:0000305" key="2"/>
<feature type="chain" id="PRO_0000060388" description="tRNA (guanine-N(1)-)-methyltransferase">
    <location>
        <begin position="1"/>
        <end position="229"/>
    </location>
</feature>
<feature type="binding site" evidence="1">
    <location>
        <position position="109"/>
    </location>
    <ligand>
        <name>S-adenosyl-L-methionine</name>
        <dbReference type="ChEBI" id="CHEBI:59789"/>
    </ligand>
</feature>
<feature type="binding site" evidence="1">
    <location>
        <begin position="129"/>
        <end position="134"/>
    </location>
    <ligand>
        <name>S-adenosyl-L-methionine</name>
        <dbReference type="ChEBI" id="CHEBI:59789"/>
    </ligand>
</feature>
<organism>
    <name type="scientific">Helicobacter pylori (strain ATCC 700392 / 26695)</name>
    <name type="common">Campylobacter pylori</name>
    <dbReference type="NCBI Taxonomy" id="85962"/>
    <lineage>
        <taxon>Bacteria</taxon>
        <taxon>Pseudomonadati</taxon>
        <taxon>Campylobacterota</taxon>
        <taxon>Epsilonproteobacteria</taxon>
        <taxon>Campylobacterales</taxon>
        <taxon>Helicobacteraceae</taxon>
        <taxon>Helicobacter</taxon>
    </lineage>
</organism>
<dbReference type="EC" id="2.1.1.228"/>
<dbReference type="EMBL" id="AE000511">
    <property type="protein sequence ID" value="AAD08192.1"/>
    <property type="molecule type" value="Genomic_DNA"/>
</dbReference>
<dbReference type="PIR" id="D64663">
    <property type="entry name" value="D64663"/>
</dbReference>
<dbReference type="RefSeq" id="NP_207939.1">
    <property type="nucleotide sequence ID" value="NC_000915.1"/>
</dbReference>
<dbReference type="RefSeq" id="WP_000672977.1">
    <property type="nucleotide sequence ID" value="NC_018939.1"/>
</dbReference>
<dbReference type="SMR" id="O25766"/>
<dbReference type="DIP" id="DIP-3681N"/>
<dbReference type="FunCoup" id="O25766">
    <property type="interactions" value="344"/>
</dbReference>
<dbReference type="IntAct" id="O25766">
    <property type="interactions" value="4"/>
</dbReference>
<dbReference type="MINT" id="O25766"/>
<dbReference type="STRING" id="85962.HP_1148"/>
<dbReference type="PaxDb" id="85962-C694_05930"/>
<dbReference type="EnsemblBacteria" id="AAD08192">
    <property type="protein sequence ID" value="AAD08192"/>
    <property type="gene ID" value="HP_1148"/>
</dbReference>
<dbReference type="KEGG" id="heo:C694_05930"/>
<dbReference type="KEGG" id="hpy:HP_1148"/>
<dbReference type="PATRIC" id="fig|85962.47.peg.1232"/>
<dbReference type="eggNOG" id="COG0336">
    <property type="taxonomic scope" value="Bacteria"/>
</dbReference>
<dbReference type="InParanoid" id="O25766"/>
<dbReference type="OrthoDB" id="9807416at2"/>
<dbReference type="PhylomeDB" id="O25766"/>
<dbReference type="Proteomes" id="UP000000429">
    <property type="component" value="Chromosome"/>
</dbReference>
<dbReference type="GO" id="GO:0005829">
    <property type="term" value="C:cytosol"/>
    <property type="evidence" value="ECO:0000318"/>
    <property type="project" value="GO_Central"/>
</dbReference>
<dbReference type="GO" id="GO:0052906">
    <property type="term" value="F:tRNA (guanine(37)-N1)-methyltransferase activity"/>
    <property type="evidence" value="ECO:0000318"/>
    <property type="project" value="GO_Central"/>
</dbReference>
<dbReference type="GO" id="GO:0002939">
    <property type="term" value="P:tRNA N1-guanine methylation"/>
    <property type="evidence" value="ECO:0000318"/>
    <property type="project" value="GO_Central"/>
</dbReference>
<dbReference type="CDD" id="cd18080">
    <property type="entry name" value="TrmD-like"/>
    <property type="match status" value="1"/>
</dbReference>
<dbReference type="FunFam" id="1.10.1270.20:FF:000005">
    <property type="entry name" value="tRNA (guanine-N(1)-)-methyltransferase"/>
    <property type="match status" value="1"/>
</dbReference>
<dbReference type="FunFam" id="3.40.1280.10:FF:000050">
    <property type="entry name" value="tRNA (guanine-N(1)-)-methyltransferase"/>
    <property type="match status" value="1"/>
</dbReference>
<dbReference type="Gene3D" id="3.40.1280.10">
    <property type="match status" value="1"/>
</dbReference>
<dbReference type="Gene3D" id="1.10.1270.20">
    <property type="entry name" value="tRNA(m1g37)methyltransferase, domain 2"/>
    <property type="match status" value="1"/>
</dbReference>
<dbReference type="HAMAP" id="MF_00605">
    <property type="entry name" value="TrmD"/>
    <property type="match status" value="1"/>
</dbReference>
<dbReference type="InterPro" id="IPR029028">
    <property type="entry name" value="Alpha/beta_knot_MTases"/>
</dbReference>
<dbReference type="InterPro" id="IPR023148">
    <property type="entry name" value="tRNA_m1G_MeTrfase_C_sf"/>
</dbReference>
<dbReference type="InterPro" id="IPR002649">
    <property type="entry name" value="tRNA_m1G_MeTrfase_TrmD"/>
</dbReference>
<dbReference type="InterPro" id="IPR029026">
    <property type="entry name" value="tRNA_m1G_MTases_N"/>
</dbReference>
<dbReference type="InterPro" id="IPR016009">
    <property type="entry name" value="tRNA_MeTrfase_TRMD/TRM10"/>
</dbReference>
<dbReference type="NCBIfam" id="NF000648">
    <property type="entry name" value="PRK00026.1"/>
    <property type="match status" value="1"/>
</dbReference>
<dbReference type="NCBIfam" id="TIGR00088">
    <property type="entry name" value="trmD"/>
    <property type="match status" value="1"/>
</dbReference>
<dbReference type="PANTHER" id="PTHR46417">
    <property type="entry name" value="TRNA (GUANINE-N(1)-)-METHYLTRANSFERASE"/>
    <property type="match status" value="1"/>
</dbReference>
<dbReference type="PANTHER" id="PTHR46417:SF1">
    <property type="entry name" value="TRNA (GUANINE-N(1)-)-METHYLTRANSFERASE"/>
    <property type="match status" value="1"/>
</dbReference>
<dbReference type="Pfam" id="PF01746">
    <property type="entry name" value="tRNA_m1G_MT"/>
    <property type="match status" value="1"/>
</dbReference>
<dbReference type="PIRSF" id="PIRSF000386">
    <property type="entry name" value="tRNA_mtase"/>
    <property type="match status" value="1"/>
</dbReference>
<dbReference type="SUPFAM" id="SSF75217">
    <property type="entry name" value="alpha/beta knot"/>
    <property type="match status" value="1"/>
</dbReference>
<sequence>MKFSVLTLFPQLVWPYFEDSILKRALEKNLFELEVLNLRDFSANKYQKADHTLIGGGAGQILDPEMVENALHSVKNPKHTIFLSAVGKPFKQTDAMRLAQKKHVVLVCGRYEGFDERSIELGADEVFCIGDFILTGGELGALCLIDSIARHIQGVLGNAQSLENESFENHYLEAPNFANAVFKSKEINKIPAPLEYSKGNHAKIKQLKLDLSKLRTKFYRLDLFKQHKS</sequence>
<protein>
    <recommendedName>
        <fullName>tRNA (guanine-N(1)-)-methyltransferase</fullName>
        <ecNumber>2.1.1.228</ecNumber>
    </recommendedName>
    <alternativeName>
        <fullName>M1G-methyltransferase</fullName>
    </alternativeName>
    <alternativeName>
        <fullName>tRNA [GM37] methyltransferase</fullName>
    </alternativeName>
</protein>
<comment type="function">
    <text evidence="1">Specifically methylates guanosine-37 in various tRNAs.</text>
</comment>
<comment type="catalytic activity">
    <reaction>
        <text>guanosine(37) in tRNA + S-adenosyl-L-methionine = N(1)-methylguanosine(37) in tRNA + S-adenosyl-L-homocysteine + H(+)</text>
        <dbReference type="Rhea" id="RHEA:36899"/>
        <dbReference type="Rhea" id="RHEA-COMP:10145"/>
        <dbReference type="Rhea" id="RHEA-COMP:10147"/>
        <dbReference type="ChEBI" id="CHEBI:15378"/>
        <dbReference type="ChEBI" id="CHEBI:57856"/>
        <dbReference type="ChEBI" id="CHEBI:59789"/>
        <dbReference type="ChEBI" id="CHEBI:73542"/>
        <dbReference type="ChEBI" id="CHEBI:74269"/>
        <dbReference type="EC" id="2.1.1.228"/>
    </reaction>
</comment>
<comment type="subunit">
    <text evidence="1">Homodimer.</text>
</comment>
<comment type="subcellular location">
    <subcellularLocation>
        <location evidence="2">Cytoplasm</location>
    </subcellularLocation>
</comment>
<comment type="similarity">
    <text evidence="2">Belongs to the RNA methyltransferase TrmD family.</text>
</comment>
<name>TRMD_HELPY</name>
<keyword id="KW-0963">Cytoplasm</keyword>
<keyword id="KW-0489">Methyltransferase</keyword>
<keyword id="KW-1185">Reference proteome</keyword>
<keyword id="KW-0949">S-adenosyl-L-methionine</keyword>
<keyword id="KW-0808">Transferase</keyword>
<keyword id="KW-0819">tRNA processing</keyword>
<reference key="1">
    <citation type="journal article" date="1997" name="Nature">
        <title>The complete genome sequence of the gastric pathogen Helicobacter pylori.</title>
        <authorList>
            <person name="Tomb J.-F."/>
            <person name="White O."/>
            <person name="Kerlavage A.R."/>
            <person name="Clayton R.A."/>
            <person name="Sutton G.G."/>
            <person name="Fleischmann R.D."/>
            <person name="Ketchum K.A."/>
            <person name="Klenk H.-P."/>
            <person name="Gill S.R."/>
            <person name="Dougherty B.A."/>
            <person name="Nelson K.E."/>
            <person name="Quackenbush J."/>
            <person name="Zhou L."/>
            <person name="Kirkness E.F."/>
            <person name="Peterson S.N."/>
            <person name="Loftus B.J."/>
            <person name="Richardson D.L."/>
            <person name="Dodson R.J."/>
            <person name="Khalak H.G."/>
            <person name="Glodek A."/>
            <person name="McKenney K."/>
            <person name="FitzGerald L.M."/>
            <person name="Lee N."/>
            <person name="Adams M.D."/>
            <person name="Hickey E.K."/>
            <person name="Berg D.E."/>
            <person name="Gocayne J.D."/>
            <person name="Utterback T.R."/>
            <person name="Peterson J.D."/>
            <person name="Kelley J.M."/>
            <person name="Cotton M.D."/>
            <person name="Weidman J.F."/>
            <person name="Fujii C."/>
            <person name="Bowman C."/>
            <person name="Watthey L."/>
            <person name="Wallin E."/>
            <person name="Hayes W.S."/>
            <person name="Borodovsky M."/>
            <person name="Karp P.D."/>
            <person name="Smith H.O."/>
            <person name="Fraser C.M."/>
            <person name="Venter J.C."/>
        </authorList>
    </citation>
    <scope>NUCLEOTIDE SEQUENCE [LARGE SCALE GENOMIC DNA]</scope>
    <source>
        <strain>ATCC 700392 / 26695</strain>
    </source>
</reference>
<gene>
    <name type="primary">trmD</name>
    <name type="ordered locus">HP_1148</name>
</gene>
<accession>O25766</accession>